<sequence>MEHFDVAIIGLGPAGSALARKLAGKMQVIALDKKHQCGTEGFSKPCGGLLAPDAQRSFIRDGLTLPVDVIANPQIFSVKTVDVAASLTRNYQRSYININRHAFDLWMKSLIPASVEVYHDSLCRKIWREDDKWHVIFRADGWEQHISARYLVGADGANSMVRRHLYPDHQIRKYVAIQQWFAEKHPVPFYSCIFDNEITDCYSWSISKDGYFIFGGAYPMKDGQTRFTTLKEKMSAFQFQFGKAVKSEKCTVLFPSRWQDFVCGKDNAFLIGEAAGFISASSLEGISYALDSAEILRAVLLKQPEKSNAAYWRATRKLRLKLFGKIVKSRCLTAPALRKWIMRSGVAHIPQLKDYPTRFTSPTSRM</sequence>
<dbReference type="EMBL" id="CP000802">
    <property type="protein sequence ID" value="ABV08104.1"/>
    <property type="molecule type" value="Genomic_DNA"/>
</dbReference>
<dbReference type="RefSeq" id="WP_001338669.1">
    <property type="nucleotide sequence ID" value="NC_009800.1"/>
</dbReference>
<dbReference type="SMR" id="A8A6F0"/>
<dbReference type="KEGG" id="ecx:EcHS_A3902"/>
<dbReference type="HOGENOM" id="CLU_024648_1_0_6"/>
<dbReference type="GO" id="GO:0071949">
    <property type="term" value="F:FAD binding"/>
    <property type="evidence" value="ECO:0007669"/>
    <property type="project" value="InterPro"/>
</dbReference>
<dbReference type="FunFam" id="3.50.50.60:FF:000151">
    <property type="entry name" value="Protein CbrA"/>
    <property type="match status" value="1"/>
</dbReference>
<dbReference type="Gene3D" id="3.50.50.60">
    <property type="entry name" value="FAD/NAD(P)-binding domain"/>
    <property type="match status" value="1"/>
</dbReference>
<dbReference type="InterPro" id="IPR002938">
    <property type="entry name" value="FAD-bd"/>
</dbReference>
<dbReference type="InterPro" id="IPR036188">
    <property type="entry name" value="FAD/NAD-bd_sf"/>
</dbReference>
<dbReference type="InterPro" id="IPR050407">
    <property type="entry name" value="Geranylgeranyl_reductase"/>
</dbReference>
<dbReference type="NCBIfam" id="NF008519">
    <property type="entry name" value="PRK11445.1"/>
    <property type="match status" value="1"/>
</dbReference>
<dbReference type="PANTHER" id="PTHR42685:SF22">
    <property type="entry name" value="CONDITIONED MEDIUM FACTOR RECEPTOR 1"/>
    <property type="match status" value="1"/>
</dbReference>
<dbReference type="PANTHER" id="PTHR42685">
    <property type="entry name" value="GERANYLGERANYL DIPHOSPHATE REDUCTASE"/>
    <property type="match status" value="1"/>
</dbReference>
<dbReference type="Pfam" id="PF01494">
    <property type="entry name" value="FAD_binding_3"/>
    <property type="match status" value="1"/>
</dbReference>
<dbReference type="PRINTS" id="PR00420">
    <property type="entry name" value="RNGMNOXGNASE"/>
</dbReference>
<dbReference type="SUPFAM" id="SSF51905">
    <property type="entry name" value="FAD/NAD(P)-binding domain"/>
    <property type="match status" value="1"/>
</dbReference>
<gene>
    <name type="primary">cbrA</name>
    <name type="ordered locus">EcHS_A3902</name>
</gene>
<name>CBRA_ECOHS</name>
<proteinExistence type="inferred from homology"/>
<organism>
    <name type="scientific">Escherichia coli O9:H4 (strain HS)</name>
    <dbReference type="NCBI Taxonomy" id="331112"/>
    <lineage>
        <taxon>Bacteria</taxon>
        <taxon>Pseudomonadati</taxon>
        <taxon>Pseudomonadota</taxon>
        <taxon>Gammaproteobacteria</taxon>
        <taxon>Enterobacterales</taxon>
        <taxon>Enterobacteriaceae</taxon>
        <taxon>Escherichia</taxon>
    </lineage>
</organism>
<feature type="chain" id="PRO_0000320285" description="Protein CbrA">
    <location>
        <begin position="1"/>
        <end position="366"/>
    </location>
</feature>
<accession>A8A6F0</accession>
<protein>
    <recommendedName>
        <fullName>Protein CbrA</fullName>
    </recommendedName>
</protein>
<reference key="1">
    <citation type="journal article" date="2008" name="J. Bacteriol.">
        <title>The pangenome structure of Escherichia coli: comparative genomic analysis of E. coli commensal and pathogenic isolates.</title>
        <authorList>
            <person name="Rasko D.A."/>
            <person name="Rosovitz M.J."/>
            <person name="Myers G.S.A."/>
            <person name="Mongodin E.F."/>
            <person name="Fricke W.F."/>
            <person name="Gajer P."/>
            <person name="Crabtree J."/>
            <person name="Sebaihia M."/>
            <person name="Thomson N.R."/>
            <person name="Chaudhuri R."/>
            <person name="Henderson I.R."/>
            <person name="Sperandio V."/>
            <person name="Ravel J."/>
        </authorList>
    </citation>
    <scope>NUCLEOTIDE SEQUENCE [LARGE SCALE GENOMIC DNA]</scope>
    <source>
        <strain>HS</strain>
    </source>
</reference>
<evidence type="ECO:0000305" key="1"/>
<comment type="similarity">
    <text evidence="1">Belongs to the CbrA family.</text>
</comment>